<keyword id="KW-0113">Calvin cycle</keyword>
<keyword id="KW-0120">Carbon dioxide fixation</keyword>
<keyword id="KW-0150">Chloroplast</keyword>
<keyword id="KW-1015">Disulfide bond</keyword>
<keyword id="KW-0456">Lyase</keyword>
<keyword id="KW-0460">Magnesium</keyword>
<keyword id="KW-0479">Metal-binding</keyword>
<keyword id="KW-0488">Methylation</keyword>
<keyword id="KW-0503">Monooxygenase</keyword>
<keyword id="KW-0560">Oxidoreductase</keyword>
<keyword id="KW-0601">Photorespiration</keyword>
<keyword id="KW-0602">Photosynthesis</keyword>
<keyword id="KW-0934">Plastid</keyword>
<protein>
    <recommendedName>
        <fullName evidence="1">Ribulose bisphosphate carboxylase large chain</fullName>
        <shortName evidence="1">RuBisCO large subunit</shortName>
        <ecNumber evidence="1">4.1.1.39</ecNumber>
    </recommendedName>
</protein>
<accession>P28391</accession>
<dbReference type="EC" id="4.1.1.39" evidence="1"/>
<dbReference type="EMBL" id="L01895">
    <property type="protein sequence ID" value="AAA85574.1"/>
    <property type="molecule type" value="Genomic_DNA"/>
</dbReference>
<dbReference type="SMR" id="P28391"/>
<dbReference type="GO" id="GO:0009507">
    <property type="term" value="C:chloroplast"/>
    <property type="evidence" value="ECO:0007669"/>
    <property type="project" value="UniProtKB-SubCell"/>
</dbReference>
<dbReference type="GO" id="GO:0000287">
    <property type="term" value="F:magnesium ion binding"/>
    <property type="evidence" value="ECO:0007669"/>
    <property type="project" value="InterPro"/>
</dbReference>
<dbReference type="GO" id="GO:0004497">
    <property type="term" value="F:monooxygenase activity"/>
    <property type="evidence" value="ECO:0007669"/>
    <property type="project" value="UniProtKB-KW"/>
</dbReference>
<dbReference type="GO" id="GO:0016984">
    <property type="term" value="F:ribulose-bisphosphate carboxylase activity"/>
    <property type="evidence" value="ECO:0007669"/>
    <property type="project" value="UniProtKB-EC"/>
</dbReference>
<dbReference type="GO" id="GO:0009853">
    <property type="term" value="P:photorespiration"/>
    <property type="evidence" value="ECO:0007669"/>
    <property type="project" value="UniProtKB-KW"/>
</dbReference>
<dbReference type="GO" id="GO:0019253">
    <property type="term" value="P:reductive pentose-phosphate cycle"/>
    <property type="evidence" value="ECO:0007669"/>
    <property type="project" value="UniProtKB-KW"/>
</dbReference>
<dbReference type="CDD" id="cd08212">
    <property type="entry name" value="RuBisCO_large_I"/>
    <property type="match status" value="1"/>
</dbReference>
<dbReference type="FunFam" id="3.20.20.110:FF:000001">
    <property type="entry name" value="Ribulose bisphosphate carboxylase large chain"/>
    <property type="match status" value="1"/>
</dbReference>
<dbReference type="FunFam" id="3.30.70.150:FF:000001">
    <property type="entry name" value="Ribulose bisphosphate carboxylase large chain"/>
    <property type="match status" value="1"/>
</dbReference>
<dbReference type="Gene3D" id="3.20.20.110">
    <property type="entry name" value="Ribulose bisphosphate carboxylase, large subunit, C-terminal domain"/>
    <property type="match status" value="1"/>
</dbReference>
<dbReference type="Gene3D" id="3.30.70.150">
    <property type="entry name" value="RuBisCO large subunit, N-terminal domain"/>
    <property type="match status" value="1"/>
</dbReference>
<dbReference type="HAMAP" id="MF_01338">
    <property type="entry name" value="RuBisCO_L_type1"/>
    <property type="match status" value="1"/>
</dbReference>
<dbReference type="InterPro" id="IPR033966">
    <property type="entry name" value="RuBisCO"/>
</dbReference>
<dbReference type="InterPro" id="IPR020878">
    <property type="entry name" value="RuBisCo_large_chain_AS"/>
</dbReference>
<dbReference type="InterPro" id="IPR000685">
    <property type="entry name" value="RuBisCO_lsu_C"/>
</dbReference>
<dbReference type="InterPro" id="IPR036376">
    <property type="entry name" value="RuBisCO_lsu_C_sf"/>
</dbReference>
<dbReference type="InterPro" id="IPR017443">
    <property type="entry name" value="RuBisCO_lsu_fd_N"/>
</dbReference>
<dbReference type="InterPro" id="IPR036422">
    <property type="entry name" value="RuBisCO_lsu_N_sf"/>
</dbReference>
<dbReference type="InterPro" id="IPR020888">
    <property type="entry name" value="RuBisCO_lsuI"/>
</dbReference>
<dbReference type="NCBIfam" id="NF003252">
    <property type="entry name" value="PRK04208.1"/>
    <property type="match status" value="1"/>
</dbReference>
<dbReference type="PANTHER" id="PTHR42704">
    <property type="entry name" value="RIBULOSE BISPHOSPHATE CARBOXYLASE"/>
    <property type="match status" value="1"/>
</dbReference>
<dbReference type="PANTHER" id="PTHR42704:SF15">
    <property type="entry name" value="RIBULOSE BISPHOSPHATE CARBOXYLASE LARGE CHAIN"/>
    <property type="match status" value="1"/>
</dbReference>
<dbReference type="Pfam" id="PF00016">
    <property type="entry name" value="RuBisCO_large"/>
    <property type="match status" value="1"/>
</dbReference>
<dbReference type="Pfam" id="PF02788">
    <property type="entry name" value="RuBisCO_large_N"/>
    <property type="match status" value="1"/>
</dbReference>
<dbReference type="SFLD" id="SFLDG01052">
    <property type="entry name" value="RuBisCO"/>
    <property type="match status" value="1"/>
</dbReference>
<dbReference type="SFLD" id="SFLDS00014">
    <property type="entry name" value="RuBisCO"/>
    <property type="match status" value="1"/>
</dbReference>
<dbReference type="SFLD" id="SFLDG00301">
    <property type="entry name" value="RuBisCO-like_proteins"/>
    <property type="match status" value="1"/>
</dbReference>
<dbReference type="SUPFAM" id="SSF51649">
    <property type="entry name" value="RuBisCo, C-terminal domain"/>
    <property type="match status" value="1"/>
</dbReference>
<dbReference type="SUPFAM" id="SSF54966">
    <property type="entry name" value="RuBisCO, large subunit, small (N-terminal) domain"/>
    <property type="match status" value="1"/>
</dbReference>
<dbReference type="PROSITE" id="PS00157">
    <property type="entry name" value="RUBISCO_LARGE"/>
    <property type="match status" value="1"/>
</dbReference>
<feature type="chain" id="PRO_0000062405" description="Ribulose bisphosphate carboxylase large chain">
    <location>
        <begin position="1" status="less than"/>
        <end position="459" status="greater than"/>
    </location>
</feature>
<feature type="active site" description="Proton acceptor" evidence="1">
    <location>
        <position position="165"/>
    </location>
</feature>
<feature type="active site" description="Proton acceptor" evidence="1">
    <location>
        <position position="284"/>
    </location>
</feature>
<feature type="binding site" description="in homodimeric partner" evidence="1">
    <location>
        <position position="113"/>
    </location>
    <ligand>
        <name>substrate</name>
    </ligand>
</feature>
<feature type="binding site" evidence="1">
    <location>
        <position position="163"/>
    </location>
    <ligand>
        <name>substrate</name>
    </ligand>
</feature>
<feature type="binding site" evidence="1">
    <location>
        <position position="167"/>
    </location>
    <ligand>
        <name>substrate</name>
    </ligand>
</feature>
<feature type="binding site" description="via carbamate group" evidence="1">
    <location>
        <position position="191"/>
    </location>
    <ligand>
        <name>Mg(2+)</name>
        <dbReference type="ChEBI" id="CHEBI:18420"/>
    </ligand>
</feature>
<feature type="binding site" evidence="1">
    <location>
        <position position="193"/>
    </location>
    <ligand>
        <name>Mg(2+)</name>
        <dbReference type="ChEBI" id="CHEBI:18420"/>
    </ligand>
</feature>
<feature type="binding site" evidence="1">
    <location>
        <position position="194"/>
    </location>
    <ligand>
        <name>Mg(2+)</name>
        <dbReference type="ChEBI" id="CHEBI:18420"/>
    </ligand>
</feature>
<feature type="binding site" evidence="1">
    <location>
        <position position="285"/>
    </location>
    <ligand>
        <name>substrate</name>
    </ligand>
</feature>
<feature type="binding site" evidence="1">
    <location>
        <position position="317"/>
    </location>
    <ligand>
        <name>substrate</name>
    </ligand>
</feature>
<feature type="binding site" evidence="1">
    <location>
        <position position="369"/>
    </location>
    <ligand>
        <name>substrate</name>
    </ligand>
</feature>
<feature type="site" description="Transition state stabilizer" evidence="1">
    <location>
        <position position="324"/>
    </location>
</feature>
<feature type="modified residue" description="N6,N6,N6-trimethyllysine" evidence="1">
    <location>
        <position position="4"/>
    </location>
</feature>
<feature type="modified residue" description="N6-carboxylysine" evidence="1">
    <location>
        <position position="191"/>
    </location>
</feature>
<feature type="disulfide bond" description="Interchain; in linked form" evidence="1">
    <location>
        <position position="237"/>
    </location>
</feature>
<feature type="non-terminal residue">
    <location>
        <position position="1"/>
    </location>
</feature>
<feature type="non-terminal residue">
    <location>
        <position position="459"/>
    </location>
</feature>
<gene>
    <name evidence="1" type="primary">rbcL</name>
</gene>
<organism>
    <name type="scientific">Ceratopetalum gummiferum</name>
    <name type="common">New South Wales Christmas bush</name>
    <dbReference type="NCBI Taxonomy" id="3778"/>
    <lineage>
        <taxon>Eukaryota</taxon>
        <taxon>Viridiplantae</taxon>
        <taxon>Streptophyta</taxon>
        <taxon>Embryophyta</taxon>
        <taxon>Tracheophyta</taxon>
        <taxon>Spermatophyta</taxon>
        <taxon>Magnoliopsida</taxon>
        <taxon>eudicotyledons</taxon>
        <taxon>Gunneridae</taxon>
        <taxon>Pentapetalae</taxon>
        <taxon>rosids</taxon>
        <taxon>fabids</taxon>
        <taxon>Oxalidales</taxon>
        <taxon>Cunoniaceae</taxon>
        <taxon>Ceratopetalum</taxon>
    </lineage>
</organism>
<geneLocation type="chloroplast"/>
<reference key="1">
    <citation type="journal article" date="1990" name="Proc. Natl. Acad. Sci. U.S.A.">
        <title>rbcL sequence divergence and phylogenetic relationships in Saxifragaceae sensu lato.</title>
        <authorList>
            <person name="Soltis D.E."/>
            <person name="Soltis P.S."/>
            <person name="Clegg M.T."/>
            <person name="Durbin M."/>
        </authorList>
    </citation>
    <scope>NUCLEOTIDE SEQUENCE [GENOMIC DNA]</scope>
</reference>
<reference key="2">
    <citation type="journal article" date="1992" name="Science">
        <title>Carnivorous plants: phylogeny and structural evolution.</title>
        <authorList>
            <person name="Albert V.A."/>
            <person name="Williams S.E."/>
            <person name="Chase M.W."/>
        </authorList>
    </citation>
    <scope>NUCLEOTIDE SEQUENCE [GENOMIC DNA]</scope>
</reference>
<name>RBL_CERGU</name>
<proteinExistence type="inferred from homology"/>
<comment type="function">
    <text evidence="1">RuBisCO catalyzes two reactions: the carboxylation of D-ribulose 1,5-bisphosphate, the primary event in carbon dioxide fixation, as well as the oxidative fragmentation of the pentose substrate in the photorespiration process. Both reactions occur simultaneously and in competition at the same active site.</text>
</comment>
<comment type="catalytic activity">
    <reaction evidence="1">
        <text>2 (2R)-3-phosphoglycerate + 2 H(+) = D-ribulose 1,5-bisphosphate + CO2 + H2O</text>
        <dbReference type="Rhea" id="RHEA:23124"/>
        <dbReference type="ChEBI" id="CHEBI:15377"/>
        <dbReference type="ChEBI" id="CHEBI:15378"/>
        <dbReference type="ChEBI" id="CHEBI:16526"/>
        <dbReference type="ChEBI" id="CHEBI:57870"/>
        <dbReference type="ChEBI" id="CHEBI:58272"/>
        <dbReference type="EC" id="4.1.1.39"/>
    </reaction>
</comment>
<comment type="catalytic activity">
    <reaction evidence="1">
        <text>D-ribulose 1,5-bisphosphate + O2 = 2-phosphoglycolate + (2R)-3-phosphoglycerate + 2 H(+)</text>
        <dbReference type="Rhea" id="RHEA:36631"/>
        <dbReference type="ChEBI" id="CHEBI:15378"/>
        <dbReference type="ChEBI" id="CHEBI:15379"/>
        <dbReference type="ChEBI" id="CHEBI:57870"/>
        <dbReference type="ChEBI" id="CHEBI:58033"/>
        <dbReference type="ChEBI" id="CHEBI:58272"/>
    </reaction>
</comment>
<comment type="cofactor">
    <cofactor evidence="1">
        <name>Mg(2+)</name>
        <dbReference type="ChEBI" id="CHEBI:18420"/>
    </cofactor>
    <text evidence="1">Binds 1 Mg(2+) ion per subunit.</text>
</comment>
<comment type="subunit">
    <text evidence="1">Heterohexadecamer of 8 large chains and 8 small chains; disulfide-linked. The disulfide link is formed within the large subunit homodimers.</text>
</comment>
<comment type="subcellular location">
    <subcellularLocation>
        <location>Plastid</location>
        <location>Chloroplast</location>
    </subcellularLocation>
</comment>
<comment type="PTM">
    <text evidence="1">The disulfide bond which can form in the large chain dimeric partners within the hexadecamer appears to be associated with oxidative stress and protein turnover.</text>
</comment>
<comment type="miscellaneous">
    <text evidence="1">The basic functional RuBisCO is composed of a large chain homodimer in a 'head-to-tail' conformation. In form I RuBisCO this homodimer is arranged in a barrel-like tetramer with the small subunits forming a tetrameric 'cap' on each end of the 'barrel'.</text>
</comment>
<comment type="similarity">
    <text evidence="1">Belongs to the RuBisCO large chain family. Type I subfamily.</text>
</comment>
<evidence type="ECO:0000255" key="1">
    <source>
        <dbReference type="HAMAP-Rule" id="MF_01338"/>
    </source>
</evidence>
<sequence>VGFKAGVKDYKLTYYTPDYETKDTDILAAFRVSPQPGVPPEEAGAAVAAESSTGTWTTVWTDGLTSLDRYKGRCYHIEPVAGEENQYIAYVAYPLDLFEEGSVTNMFTSIVGNVFGFKALRALRLEDLRIPTAYVKTFQGPPHGIQVERDKLNKYGRPLLGCTIKPKLGLSAKNYGRAVYECLRGGLDFTKDDENVNSQPFMRWRDRFVFCAEAIYKAQAETGEIKGHYLNATAGTCEEMMKRAIFARELGVPIVMHDYLTGGFTANTSLAHYCRDNGLLLHIHRAMHAVIDRQKNHGIHFRVLAKALRMSGGDHIHAGTVVGKLEGERDITLGFVDLLRDDFIEKDRSRGIYFTQDWVSLPGVLPVASGGIHVWHMPALTEIFGDDSVLQFGGGTLGHPWGNAPGAVANRVALEACVQARNEGRDLAREGNEIIREASKWSPELAAACEVWKEIKFEF</sequence>